<comment type="similarity">
    <text evidence="2">Belongs to the eukaryotic ribosomal protein eL33 family.</text>
</comment>
<keyword id="KW-1185">Reference proteome</keyword>
<keyword id="KW-0687">Ribonucleoprotein</keyword>
<keyword id="KW-0689">Ribosomal protein</keyword>
<proteinExistence type="inferred from homology"/>
<protein>
    <recommendedName>
        <fullName evidence="1">Large ribosomal subunit protein eL33z</fullName>
    </recommendedName>
    <alternativeName>
        <fullName>60S ribosomal protein L35a-2</fullName>
    </alternativeName>
</protein>
<name>R35A2_ARATH</name>
<sequence>MKGRQGERVRLYVRGTVLGYKRSKSNQYPNTSLIQIEGVNTQEEVNWYKGKRLAYIYKAKTKKNGSHYRCIWGKVTRPHGNSGVVRSKFTSNLPPKSMGARVRVFMYPSNI</sequence>
<gene>
    <name type="primary">RPL35AB</name>
    <name type="ordered locus">At1g41880</name>
    <name type="ORF">F5A13.4</name>
</gene>
<reference key="1">
    <citation type="journal article" date="2000" name="Nature">
        <title>Sequence and analysis of chromosome 1 of the plant Arabidopsis thaliana.</title>
        <authorList>
            <person name="Theologis A."/>
            <person name="Ecker J.R."/>
            <person name="Palm C.J."/>
            <person name="Federspiel N.A."/>
            <person name="Kaul S."/>
            <person name="White O."/>
            <person name="Alonso J."/>
            <person name="Altafi H."/>
            <person name="Araujo R."/>
            <person name="Bowman C.L."/>
            <person name="Brooks S.Y."/>
            <person name="Buehler E."/>
            <person name="Chan A."/>
            <person name="Chao Q."/>
            <person name="Chen H."/>
            <person name="Cheuk R.F."/>
            <person name="Chin C.W."/>
            <person name="Chung M.K."/>
            <person name="Conn L."/>
            <person name="Conway A.B."/>
            <person name="Conway A.R."/>
            <person name="Creasy T.H."/>
            <person name="Dewar K."/>
            <person name="Dunn P."/>
            <person name="Etgu P."/>
            <person name="Feldblyum T.V."/>
            <person name="Feng J.-D."/>
            <person name="Fong B."/>
            <person name="Fujii C.Y."/>
            <person name="Gill J.E."/>
            <person name="Goldsmith A.D."/>
            <person name="Haas B."/>
            <person name="Hansen N.F."/>
            <person name="Hughes B."/>
            <person name="Huizar L."/>
            <person name="Hunter J.L."/>
            <person name="Jenkins J."/>
            <person name="Johnson-Hopson C."/>
            <person name="Khan S."/>
            <person name="Khaykin E."/>
            <person name="Kim C.J."/>
            <person name="Koo H.L."/>
            <person name="Kremenetskaia I."/>
            <person name="Kurtz D.B."/>
            <person name="Kwan A."/>
            <person name="Lam B."/>
            <person name="Langin-Hooper S."/>
            <person name="Lee A."/>
            <person name="Lee J.M."/>
            <person name="Lenz C.A."/>
            <person name="Li J.H."/>
            <person name="Li Y.-P."/>
            <person name="Lin X."/>
            <person name="Liu S.X."/>
            <person name="Liu Z.A."/>
            <person name="Luros J.S."/>
            <person name="Maiti R."/>
            <person name="Marziali A."/>
            <person name="Militscher J."/>
            <person name="Miranda M."/>
            <person name="Nguyen M."/>
            <person name="Nierman W.C."/>
            <person name="Osborne B.I."/>
            <person name="Pai G."/>
            <person name="Peterson J."/>
            <person name="Pham P.K."/>
            <person name="Rizzo M."/>
            <person name="Rooney T."/>
            <person name="Rowley D."/>
            <person name="Sakano H."/>
            <person name="Salzberg S.L."/>
            <person name="Schwartz J.R."/>
            <person name="Shinn P."/>
            <person name="Southwick A.M."/>
            <person name="Sun H."/>
            <person name="Tallon L.J."/>
            <person name="Tambunga G."/>
            <person name="Toriumi M.J."/>
            <person name="Town C.D."/>
            <person name="Utterback T."/>
            <person name="Van Aken S."/>
            <person name="Vaysberg M."/>
            <person name="Vysotskaia V.S."/>
            <person name="Walker M."/>
            <person name="Wu D."/>
            <person name="Yu G."/>
            <person name="Fraser C.M."/>
            <person name="Venter J.C."/>
            <person name="Davis R.W."/>
        </authorList>
    </citation>
    <scope>NUCLEOTIDE SEQUENCE [LARGE SCALE GENOMIC DNA]</scope>
    <source>
        <strain>cv. Columbia</strain>
    </source>
</reference>
<reference key="2">
    <citation type="journal article" date="2017" name="Plant J.">
        <title>Araport11: a complete reannotation of the Arabidopsis thaliana reference genome.</title>
        <authorList>
            <person name="Cheng C.Y."/>
            <person name="Krishnakumar V."/>
            <person name="Chan A.P."/>
            <person name="Thibaud-Nissen F."/>
            <person name="Schobel S."/>
            <person name="Town C.D."/>
        </authorList>
    </citation>
    <scope>GENOME REANNOTATION</scope>
    <source>
        <strain>cv. Columbia</strain>
    </source>
</reference>
<reference key="3">
    <citation type="journal article" date="2003" name="Science">
        <title>Empirical analysis of transcriptional activity in the Arabidopsis genome.</title>
        <authorList>
            <person name="Yamada K."/>
            <person name="Lim J."/>
            <person name="Dale J.M."/>
            <person name="Chen H."/>
            <person name="Shinn P."/>
            <person name="Palm C.J."/>
            <person name="Southwick A.M."/>
            <person name="Wu H.C."/>
            <person name="Kim C.J."/>
            <person name="Nguyen M."/>
            <person name="Pham P.K."/>
            <person name="Cheuk R.F."/>
            <person name="Karlin-Newmann G."/>
            <person name="Liu S.X."/>
            <person name="Lam B."/>
            <person name="Sakano H."/>
            <person name="Wu T."/>
            <person name="Yu G."/>
            <person name="Miranda M."/>
            <person name="Quach H.L."/>
            <person name="Tripp M."/>
            <person name="Chang C.H."/>
            <person name="Lee J.M."/>
            <person name="Toriumi M.J."/>
            <person name="Chan M.M."/>
            <person name="Tang C.C."/>
            <person name="Onodera C.S."/>
            <person name="Deng J.M."/>
            <person name="Akiyama K."/>
            <person name="Ansari Y."/>
            <person name="Arakawa T."/>
            <person name="Banh J."/>
            <person name="Banno F."/>
            <person name="Bowser L."/>
            <person name="Brooks S.Y."/>
            <person name="Carninci P."/>
            <person name="Chao Q."/>
            <person name="Choy N."/>
            <person name="Enju A."/>
            <person name="Goldsmith A.D."/>
            <person name="Gurjal M."/>
            <person name="Hansen N.F."/>
            <person name="Hayashizaki Y."/>
            <person name="Johnson-Hopson C."/>
            <person name="Hsuan V.W."/>
            <person name="Iida K."/>
            <person name="Karnes M."/>
            <person name="Khan S."/>
            <person name="Koesema E."/>
            <person name="Ishida J."/>
            <person name="Jiang P.X."/>
            <person name="Jones T."/>
            <person name="Kawai J."/>
            <person name="Kamiya A."/>
            <person name="Meyers C."/>
            <person name="Nakajima M."/>
            <person name="Narusaka M."/>
            <person name="Seki M."/>
            <person name="Sakurai T."/>
            <person name="Satou M."/>
            <person name="Tamse R."/>
            <person name="Vaysberg M."/>
            <person name="Wallender E.K."/>
            <person name="Wong C."/>
            <person name="Yamamura Y."/>
            <person name="Yuan S."/>
            <person name="Shinozaki K."/>
            <person name="Davis R.W."/>
            <person name="Theologis A."/>
            <person name="Ecker J.R."/>
        </authorList>
    </citation>
    <scope>NUCLEOTIDE SEQUENCE [LARGE SCALE MRNA]</scope>
    <source>
        <strain>cv. Columbia</strain>
    </source>
</reference>
<reference key="4">
    <citation type="submission" date="2002-03" db="EMBL/GenBank/DDBJ databases">
        <title>Full-length cDNA from Arabidopsis thaliana.</title>
        <authorList>
            <person name="Brover V.V."/>
            <person name="Troukhan M.E."/>
            <person name="Alexandrov N.A."/>
            <person name="Lu Y.-P."/>
            <person name="Flavell R.B."/>
            <person name="Feldmann K.A."/>
        </authorList>
    </citation>
    <scope>NUCLEOTIDE SEQUENCE [LARGE SCALE MRNA]</scope>
</reference>
<reference key="5">
    <citation type="journal article" date="2001" name="Plant Physiol.">
        <title>The organization of cytoplasmic ribosomal protein genes in the Arabidopsis genome.</title>
        <authorList>
            <person name="Barakat A."/>
            <person name="Szick-Miranda K."/>
            <person name="Chang I.-F."/>
            <person name="Guyot R."/>
            <person name="Blanc G."/>
            <person name="Cooke R."/>
            <person name="Delseny M."/>
            <person name="Bailey-Serres J."/>
        </authorList>
    </citation>
    <scope>GENE FAMILY ORGANIZATION</scope>
    <scope>NOMENCLATURE</scope>
</reference>
<reference key="6">
    <citation type="journal article" date="2023" name="Plant Cell">
        <title>An updated nomenclature for plant ribosomal protein genes.</title>
        <authorList>
            <person name="Scarpin M.R."/>
            <person name="Busche M."/>
            <person name="Martinez R.E."/>
            <person name="Harper L.C."/>
            <person name="Reiser L."/>
            <person name="Szakonyi D."/>
            <person name="Merchante C."/>
            <person name="Lan T."/>
            <person name="Xiong W."/>
            <person name="Mo B."/>
            <person name="Tang G."/>
            <person name="Chen X."/>
            <person name="Bailey-Serres J."/>
            <person name="Browning K.S."/>
            <person name="Brunkard J.O."/>
        </authorList>
    </citation>
    <scope>NOMENCLATURE</scope>
</reference>
<evidence type="ECO:0000303" key="1">
    <source>
    </source>
</evidence>
<evidence type="ECO:0000305" key="2"/>
<organism>
    <name type="scientific">Arabidopsis thaliana</name>
    <name type="common">Mouse-ear cress</name>
    <dbReference type="NCBI Taxonomy" id="3702"/>
    <lineage>
        <taxon>Eukaryota</taxon>
        <taxon>Viridiplantae</taxon>
        <taxon>Streptophyta</taxon>
        <taxon>Embryophyta</taxon>
        <taxon>Tracheophyta</taxon>
        <taxon>Spermatophyta</taxon>
        <taxon>Magnoliopsida</taxon>
        <taxon>eudicotyledons</taxon>
        <taxon>Gunneridae</taxon>
        <taxon>Pentapetalae</taxon>
        <taxon>rosids</taxon>
        <taxon>malvids</taxon>
        <taxon>Brassicales</taxon>
        <taxon>Brassicaceae</taxon>
        <taxon>Camelineae</taxon>
        <taxon>Arabidopsis</taxon>
    </lineage>
</organism>
<accession>Q9FZH0</accession>
<dbReference type="EMBL" id="AC008046">
    <property type="protein sequence ID" value="AAF99832.1"/>
    <property type="molecule type" value="Genomic_DNA"/>
</dbReference>
<dbReference type="EMBL" id="CP002684">
    <property type="protein sequence ID" value="AEE31912.1"/>
    <property type="molecule type" value="Genomic_DNA"/>
</dbReference>
<dbReference type="EMBL" id="CP002684">
    <property type="protein sequence ID" value="ANM58431.1"/>
    <property type="molecule type" value="Genomic_DNA"/>
</dbReference>
<dbReference type="EMBL" id="AF370549">
    <property type="protein sequence ID" value="AAK48976.1"/>
    <property type="molecule type" value="mRNA"/>
</dbReference>
<dbReference type="EMBL" id="BT006517">
    <property type="protein sequence ID" value="AAP21325.1"/>
    <property type="molecule type" value="mRNA"/>
</dbReference>
<dbReference type="EMBL" id="AY084500">
    <property type="protein sequence ID" value="AAM61069.1"/>
    <property type="molecule type" value="mRNA"/>
</dbReference>
<dbReference type="PIR" id="D96492">
    <property type="entry name" value="D96492"/>
</dbReference>
<dbReference type="RefSeq" id="NP_001319158.1">
    <property type="nucleotide sequence ID" value="NM_001333197.1"/>
</dbReference>
<dbReference type="RefSeq" id="NP_001320865.1">
    <property type="nucleotide sequence ID" value="NM_001333198.1"/>
</dbReference>
<dbReference type="SMR" id="Q9FZH0"/>
<dbReference type="BioGRID" id="26027">
    <property type="interactions" value="3"/>
</dbReference>
<dbReference type="FunCoup" id="Q9FZH0">
    <property type="interactions" value="2880"/>
</dbReference>
<dbReference type="STRING" id="3702.Q9FZH0"/>
<dbReference type="PaxDb" id="3702-AT1G41880.1"/>
<dbReference type="ProteomicsDB" id="236465"/>
<dbReference type="EnsemblPlants" id="AT1G41880.1">
    <property type="protein sequence ID" value="AT1G41880.1"/>
    <property type="gene ID" value="AT1G41880"/>
</dbReference>
<dbReference type="EnsemblPlants" id="AT1G41880.2">
    <property type="protein sequence ID" value="AT1G41880.2"/>
    <property type="gene ID" value="AT1G41880"/>
</dbReference>
<dbReference type="GeneID" id="840799"/>
<dbReference type="Gramene" id="AT1G41880.1">
    <property type="protein sequence ID" value="AT1G41880.1"/>
    <property type="gene ID" value="AT1G41880"/>
</dbReference>
<dbReference type="Gramene" id="AT1G41880.2">
    <property type="protein sequence ID" value="AT1G41880.2"/>
    <property type="gene ID" value="AT1G41880"/>
</dbReference>
<dbReference type="KEGG" id="ath:AT1G41880"/>
<dbReference type="Araport" id="AT1G41880"/>
<dbReference type="TAIR" id="AT1G41880"/>
<dbReference type="eggNOG" id="KOG0887">
    <property type="taxonomic scope" value="Eukaryota"/>
</dbReference>
<dbReference type="HOGENOM" id="CLU_100745_2_0_1"/>
<dbReference type="InParanoid" id="Q9FZH0"/>
<dbReference type="OMA" id="VELFKMY"/>
<dbReference type="OrthoDB" id="1023925at2759"/>
<dbReference type="PhylomeDB" id="Q9FZH0"/>
<dbReference type="PRO" id="PR:Q9FZH0"/>
<dbReference type="Proteomes" id="UP000006548">
    <property type="component" value="Chromosome 1"/>
</dbReference>
<dbReference type="ExpressionAtlas" id="Q9FZH0">
    <property type="expression patterns" value="baseline and differential"/>
</dbReference>
<dbReference type="GO" id="GO:0022625">
    <property type="term" value="C:cytosolic large ribosomal subunit"/>
    <property type="evidence" value="ECO:0007005"/>
    <property type="project" value="TAIR"/>
</dbReference>
<dbReference type="GO" id="GO:0005634">
    <property type="term" value="C:nucleus"/>
    <property type="evidence" value="ECO:0007005"/>
    <property type="project" value="TAIR"/>
</dbReference>
<dbReference type="GO" id="GO:0003729">
    <property type="term" value="F:mRNA binding"/>
    <property type="evidence" value="ECO:0000314"/>
    <property type="project" value="TAIR"/>
</dbReference>
<dbReference type="GO" id="GO:0003735">
    <property type="term" value="F:structural constituent of ribosome"/>
    <property type="evidence" value="ECO:0000314"/>
    <property type="project" value="CAFA"/>
</dbReference>
<dbReference type="GO" id="GO:0006412">
    <property type="term" value="P:translation"/>
    <property type="evidence" value="ECO:0007669"/>
    <property type="project" value="InterPro"/>
</dbReference>
<dbReference type="FunFam" id="2.40.10.190:FF:000001">
    <property type="entry name" value="60S ribosomal protein L35a"/>
    <property type="match status" value="1"/>
</dbReference>
<dbReference type="Gene3D" id="2.40.10.190">
    <property type="entry name" value="translation elongation factor selb, chain A, domain 4"/>
    <property type="match status" value="1"/>
</dbReference>
<dbReference type="HAMAP" id="MF_00573">
    <property type="entry name" value="Ribosomal_eL33"/>
    <property type="match status" value="1"/>
</dbReference>
<dbReference type="InterPro" id="IPR001780">
    <property type="entry name" value="Ribosomal_eL33"/>
</dbReference>
<dbReference type="InterPro" id="IPR018266">
    <property type="entry name" value="Ribosomal_eL33_CS"/>
</dbReference>
<dbReference type="InterPro" id="IPR038661">
    <property type="entry name" value="Ribosomal_eL33_sf"/>
</dbReference>
<dbReference type="InterPro" id="IPR009000">
    <property type="entry name" value="Transl_B-barrel_sf"/>
</dbReference>
<dbReference type="PANTHER" id="PTHR10902">
    <property type="entry name" value="60S RIBOSOMAL PROTEIN L35A"/>
    <property type="match status" value="1"/>
</dbReference>
<dbReference type="Pfam" id="PF01247">
    <property type="entry name" value="Ribosomal_L35Ae"/>
    <property type="match status" value="1"/>
</dbReference>
<dbReference type="SUPFAM" id="SSF50447">
    <property type="entry name" value="Translation proteins"/>
    <property type="match status" value="1"/>
</dbReference>
<dbReference type="PROSITE" id="PS01105">
    <property type="entry name" value="RIBOSOMAL_L35AE"/>
    <property type="match status" value="1"/>
</dbReference>
<feature type="chain" id="PRO_0000245491" description="Large ribosomal subunit protein eL33z">
    <location>
        <begin position="1"/>
        <end position="111"/>
    </location>
</feature>